<keyword id="KW-0687">Ribonucleoprotein</keyword>
<keyword id="KW-0689">Ribosomal protein</keyword>
<keyword id="KW-0694">RNA-binding</keyword>
<keyword id="KW-0699">rRNA-binding</keyword>
<feature type="chain" id="PRO_1000133554" description="Small ribosomal subunit protein bS6">
    <location>
        <begin position="1"/>
        <end position="122"/>
    </location>
</feature>
<gene>
    <name evidence="1" type="primary">rpsF</name>
    <name type="ordered locus">VCM66_0350</name>
</gene>
<name>RS6_VIBCM</name>
<dbReference type="EMBL" id="CP001233">
    <property type="protein sequence ID" value="ACP04678.1"/>
    <property type="molecule type" value="Genomic_DNA"/>
</dbReference>
<dbReference type="RefSeq" id="WP_001216668.1">
    <property type="nucleotide sequence ID" value="NC_012578.1"/>
</dbReference>
<dbReference type="SMR" id="C3LR98"/>
<dbReference type="GeneID" id="88783679"/>
<dbReference type="KEGG" id="vcm:VCM66_0350"/>
<dbReference type="HOGENOM" id="CLU_113441_6_1_6"/>
<dbReference type="Proteomes" id="UP000001217">
    <property type="component" value="Chromosome I"/>
</dbReference>
<dbReference type="GO" id="GO:0022627">
    <property type="term" value="C:cytosolic small ribosomal subunit"/>
    <property type="evidence" value="ECO:0007669"/>
    <property type="project" value="TreeGrafter"/>
</dbReference>
<dbReference type="GO" id="GO:0070181">
    <property type="term" value="F:small ribosomal subunit rRNA binding"/>
    <property type="evidence" value="ECO:0007669"/>
    <property type="project" value="TreeGrafter"/>
</dbReference>
<dbReference type="GO" id="GO:0003735">
    <property type="term" value="F:structural constituent of ribosome"/>
    <property type="evidence" value="ECO:0007669"/>
    <property type="project" value="InterPro"/>
</dbReference>
<dbReference type="GO" id="GO:0006412">
    <property type="term" value="P:translation"/>
    <property type="evidence" value="ECO:0007669"/>
    <property type="project" value="UniProtKB-UniRule"/>
</dbReference>
<dbReference type="CDD" id="cd00473">
    <property type="entry name" value="bS6"/>
    <property type="match status" value="1"/>
</dbReference>
<dbReference type="FunFam" id="3.30.70.60:FF:000003">
    <property type="entry name" value="30S ribosomal protein S6"/>
    <property type="match status" value="1"/>
</dbReference>
<dbReference type="Gene3D" id="3.30.70.60">
    <property type="match status" value="1"/>
</dbReference>
<dbReference type="HAMAP" id="MF_00360">
    <property type="entry name" value="Ribosomal_bS6"/>
    <property type="match status" value="1"/>
</dbReference>
<dbReference type="InterPro" id="IPR000529">
    <property type="entry name" value="Ribosomal_bS6"/>
</dbReference>
<dbReference type="InterPro" id="IPR020815">
    <property type="entry name" value="Ribosomal_bS6_CS"/>
</dbReference>
<dbReference type="InterPro" id="IPR035980">
    <property type="entry name" value="Ribosomal_bS6_sf"/>
</dbReference>
<dbReference type="InterPro" id="IPR020814">
    <property type="entry name" value="Ribosomal_S6_plastid/chlpt"/>
</dbReference>
<dbReference type="InterPro" id="IPR014717">
    <property type="entry name" value="Transl_elong_EF1B/ribsomal_bS6"/>
</dbReference>
<dbReference type="NCBIfam" id="TIGR00166">
    <property type="entry name" value="S6"/>
    <property type="match status" value="1"/>
</dbReference>
<dbReference type="PANTHER" id="PTHR21011">
    <property type="entry name" value="MITOCHONDRIAL 28S RIBOSOMAL PROTEIN S6"/>
    <property type="match status" value="1"/>
</dbReference>
<dbReference type="PANTHER" id="PTHR21011:SF1">
    <property type="entry name" value="SMALL RIBOSOMAL SUBUNIT PROTEIN BS6M"/>
    <property type="match status" value="1"/>
</dbReference>
<dbReference type="Pfam" id="PF01250">
    <property type="entry name" value="Ribosomal_S6"/>
    <property type="match status" value="1"/>
</dbReference>
<dbReference type="SUPFAM" id="SSF54995">
    <property type="entry name" value="Ribosomal protein S6"/>
    <property type="match status" value="1"/>
</dbReference>
<dbReference type="PROSITE" id="PS01048">
    <property type="entry name" value="RIBOSOMAL_S6"/>
    <property type="match status" value="1"/>
</dbReference>
<comment type="function">
    <text evidence="1">Binds together with bS18 to 16S ribosomal RNA.</text>
</comment>
<comment type="similarity">
    <text evidence="1">Belongs to the bacterial ribosomal protein bS6 family.</text>
</comment>
<proteinExistence type="inferred from homology"/>
<protein>
    <recommendedName>
        <fullName evidence="1">Small ribosomal subunit protein bS6</fullName>
    </recommendedName>
    <alternativeName>
        <fullName evidence="2">30S ribosomal protein S6</fullName>
    </alternativeName>
</protein>
<sequence>MRHYEIVFMVHPDQSEQVAGMIERYTGSITEAGGKIHRLEDWGRRQLAYPINKLHKAHYVLMNVEADQAVVDELETAFRFNDAVLRNMIMRTKAAITEPSIMLKAREERVKRDEMKFDADVE</sequence>
<organism>
    <name type="scientific">Vibrio cholerae serotype O1 (strain M66-2)</name>
    <dbReference type="NCBI Taxonomy" id="579112"/>
    <lineage>
        <taxon>Bacteria</taxon>
        <taxon>Pseudomonadati</taxon>
        <taxon>Pseudomonadota</taxon>
        <taxon>Gammaproteobacteria</taxon>
        <taxon>Vibrionales</taxon>
        <taxon>Vibrionaceae</taxon>
        <taxon>Vibrio</taxon>
    </lineage>
</organism>
<reference key="1">
    <citation type="journal article" date="2008" name="PLoS ONE">
        <title>A recalibrated molecular clock and independent origins for the cholera pandemic clones.</title>
        <authorList>
            <person name="Feng L."/>
            <person name="Reeves P.R."/>
            <person name="Lan R."/>
            <person name="Ren Y."/>
            <person name="Gao C."/>
            <person name="Zhou Z."/>
            <person name="Ren Y."/>
            <person name="Cheng J."/>
            <person name="Wang W."/>
            <person name="Wang J."/>
            <person name="Qian W."/>
            <person name="Li D."/>
            <person name="Wang L."/>
        </authorList>
    </citation>
    <scope>NUCLEOTIDE SEQUENCE [LARGE SCALE GENOMIC DNA]</scope>
    <source>
        <strain>M66-2</strain>
    </source>
</reference>
<accession>C3LR98</accession>
<evidence type="ECO:0000255" key="1">
    <source>
        <dbReference type="HAMAP-Rule" id="MF_00360"/>
    </source>
</evidence>
<evidence type="ECO:0000305" key="2"/>